<sequence>MDTMRQRILVVDDDASLAEMLTIVLRGEGFDTAVIGDGTQALTAVRELRPDLVLLDLMLPGMNGIDVCRVLRADSGVPIVMLTAKTDTVDVVLGLESGADDYIMKPFKPKELVARVRARLRRNDDEPAEMLSIADVEIDVPAHKVTRNGEQISLTPLEFDLLVALARKPRQVFTRDVLLEQVWGYRHPADTRLVNVHVQRLRAKVEKDPENPTVVLTVRGVGYKAGPP</sequence>
<dbReference type="EMBL" id="U01971">
    <property type="protein sequence ID" value="AAB07804.1"/>
    <property type="status" value="ALT_INIT"/>
    <property type="molecule type" value="Genomic_DNA"/>
</dbReference>
<dbReference type="EMBL" id="AL123456">
    <property type="protein sequence ID" value="CCP46065.1"/>
    <property type="molecule type" value="Genomic_DNA"/>
</dbReference>
<dbReference type="PIR" id="H70592">
    <property type="entry name" value="H70592"/>
</dbReference>
<dbReference type="RefSeq" id="NP_217763.1">
    <property type="nucleotide sequence ID" value="NC_000962.3"/>
</dbReference>
<dbReference type="RefSeq" id="WP_003899985.1">
    <property type="nucleotide sequence ID" value="NZ_NVQJ01000003.1"/>
</dbReference>
<dbReference type="PDB" id="2GWR">
    <property type="method" value="X-ray"/>
    <property type="resolution" value="2.10 A"/>
    <property type="chains" value="A=1-228"/>
</dbReference>
<dbReference type="PDB" id="3NHZ">
    <property type="method" value="X-ray"/>
    <property type="resolution" value="2.50 A"/>
    <property type="chains" value="A/B/C/D=1-125"/>
</dbReference>
<dbReference type="PDBsum" id="2GWR"/>
<dbReference type="PDBsum" id="3NHZ"/>
<dbReference type="SMR" id="P9WGM7"/>
<dbReference type="FunCoup" id="P9WGM7">
    <property type="interactions" value="84"/>
</dbReference>
<dbReference type="STRING" id="83332.Rv3246c"/>
<dbReference type="PaxDb" id="83332-Rv3246c"/>
<dbReference type="DNASU" id="888743"/>
<dbReference type="GeneID" id="45427240"/>
<dbReference type="GeneID" id="888743"/>
<dbReference type="KEGG" id="mtu:Rv3246c"/>
<dbReference type="KEGG" id="mtv:RVBD_3246c"/>
<dbReference type="TubercuList" id="Rv3246c"/>
<dbReference type="eggNOG" id="COG0745">
    <property type="taxonomic scope" value="Bacteria"/>
</dbReference>
<dbReference type="InParanoid" id="P9WGM7"/>
<dbReference type="OrthoDB" id="9790442at2"/>
<dbReference type="PhylomeDB" id="P9WGM7"/>
<dbReference type="EvolutionaryTrace" id="P9WGM7"/>
<dbReference type="Proteomes" id="UP000001584">
    <property type="component" value="Chromosome"/>
</dbReference>
<dbReference type="GO" id="GO:0005829">
    <property type="term" value="C:cytosol"/>
    <property type="evidence" value="ECO:0000318"/>
    <property type="project" value="GO_Central"/>
</dbReference>
<dbReference type="GO" id="GO:0005886">
    <property type="term" value="C:plasma membrane"/>
    <property type="evidence" value="ECO:0007005"/>
    <property type="project" value="MTBBASE"/>
</dbReference>
<dbReference type="GO" id="GO:0032993">
    <property type="term" value="C:protein-DNA complex"/>
    <property type="evidence" value="ECO:0000318"/>
    <property type="project" value="GO_Central"/>
</dbReference>
<dbReference type="GO" id="GO:0046872">
    <property type="term" value="F:metal ion binding"/>
    <property type="evidence" value="ECO:0007669"/>
    <property type="project" value="UniProtKB-KW"/>
</dbReference>
<dbReference type="GO" id="GO:0000156">
    <property type="term" value="F:phosphorelay response regulator activity"/>
    <property type="evidence" value="ECO:0000318"/>
    <property type="project" value="GO_Central"/>
</dbReference>
<dbReference type="GO" id="GO:0000976">
    <property type="term" value="F:transcription cis-regulatory region binding"/>
    <property type="evidence" value="ECO:0000318"/>
    <property type="project" value="GO_Central"/>
</dbReference>
<dbReference type="GO" id="GO:0051701">
    <property type="term" value="P:biological process involved in interaction with host"/>
    <property type="evidence" value="ECO:0000315"/>
    <property type="project" value="MTBBASE"/>
</dbReference>
<dbReference type="GO" id="GO:0000160">
    <property type="term" value="P:phosphorelay signal transduction system"/>
    <property type="evidence" value="ECO:0000314"/>
    <property type="project" value="UniProtKB"/>
</dbReference>
<dbReference type="GO" id="GO:0045893">
    <property type="term" value="P:positive regulation of DNA-templated transcription"/>
    <property type="evidence" value="ECO:0000314"/>
    <property type="project" value="MTBBASE"/>
</dbReference>
<dbReference type="GO" id="GO:0006355">
    <property type="term" value="P:regulation of DNA-templated transcription"/>
    <property type="evidence" value="ECO:0000318"/>
    <property type="project" value="GO_Central"/>
</dbReference>
<dbReference type="CDD" id="cd17626">
    <property type="entry name" value="REC_OmpR_MtrA-like"/>
    <property type="match status" value="1"/>
</dbReference>
<dbReference type="CDD" id="cd00383">
    <property type="entry name" value="trans_reg_C"/>
    <property type="match status" value="1"/>
</dbReference>
<dbReference type="FunFam" id="1.10.10.10:FF:000033">
    <property type="entry name" value="DNA-binding response regulator MtrA"/>
    <property type="match status" value="1"/>
</dbReference>
<dbReference type="FunFam" id="3.40.50.2300:FF:000001">
    <property type="entry name" value="DNA-binding response regulator PhoB"/>
    <property type="match status" value="1"/>
</dbReference>
<dbReference type="Gene3D" id="3.40.50.2300">
    <property type="match status" value="1"/>
</dbReference>
<dbReference type="Gene3D" id="6.10.250.690">
    <property type="match status" value="1"/>
</dbReference>
<dbReference type="Gene3D" id="1.10.10.10">
    <property type="entry name" value="Winged helix-like DNA-binding domain superfamily/Winged helix DNA-binding domain"/>
    <property type="match status" value="1"/>
</dbReference>
<dbReference type="InterPro" id="IPR011006">
    <property type="entry name" value="CheY-like_superfamily"/>
</dbReference>
<dbReference type="InterPro" id="IPR047673">
    <property type="entry name" value="MtrA_REC"/>
</dbReference>
<dbReference type="InterPro" id="IPR047671">
    <property type="entry name" value="MtrAB_MtrA"/>
</dbReference>
<dbReference type="InterPro" id="IPR001867">
    <property type="entry name" value="OmpR/PhoB-type_DNA-bd"/>
</dbReference>
<dbReference type="InterPro" id="IPR001789">
    <property type="entry name" value="Sig_transdc_resp-reg_receiver"/>
</dbReference>
<dbReference type="InterPro" id="IPR039420">
    <property type="entry name" value="WalR-like"/>
</dbReference>
<dbReference type="InterPro" id="IPR036388">
    <property type="entry name" value="WH-like_DNA-bd_sf"/>
</dbReference>
<dbReference type="NCBIfam" id="NF040689">
    <property type="entry name" value="MtrAB_MtrA"/>
    <property type="match status" value="1"/>
</dbReference>
<dbReference type="PANTHER" id="PTHR48111:SF21">
    <property type="entry name" value="DNA-BINDING DUAL MASTER TRANSCRIPTIONAL REGULATOR RPAA"/>
    <property type="match status" value="1"/>
</dbReference>
<dbReference type="PANTHER" id="PTHR48111">
    <property type="entry name" value="REGULATOR OF RPOS"/>
    <property type="match status" value="1"/>
</dbReference>
<dbReference type="Pfam" id="PF00072">
    <property type="entry name" value="Response_reg"/>
    <property type="match status" value="1"/>
</dbReference>
<dbReference type="Pfam" id="PF00486">
    <property type="entry name" value="Trans_reg_C"/>
    <property type="match status" value="1"/>
</dbReference>
<dbReference type="SMART" id="SM00448">
    <property type="entry name" value="REC"/>
    <property type="match status" value="1"/>
</dbReference>
<dbReference type="SMART" id="SM00862">
    <property type="entry name" value="Trans_reg_C"/>
    <property type="match status" value="1"/>
</dbReference>
<dbReference type="SUPFAM" id="SSF52172">
    <property type="entry name" value="CheY-like"/>
    <property type="match status" value="1"/>
</dbReference>
<dbReference type="PROSITE" id="PS51755">
    <property type="entry name" value="OMPR_PHOB"/>
    <property type="match status" value="1"/>
</dbReference>
<dbReference type="PROSITE" id="PS50110">
    <property type="entry name" value="RESPONSE_REGULATORY"/>
    <property type="match status" value="1"/>
</dbReference>
<gene>
    <name type="primary">mtrA</name>
    <name type="ordered locus">Rv3246c</name>
    <name type="ORF">MTCY20B11.21c</name>
</gene>
<comment type="function">
    <text evidence="7 10 11">Member of the two-component regulatory system MtrA/MtrB. Binds direct repeat motifs of sequence 5'-GTCACAGCG-3', phosphorylation confers higher affinity. Overexpression decreases bacteria viability upon infection of human THP-1 macrophage cell line, due at least in part to impaired blockage of phagosome-lysosome fusion (upon infection bacteria usually remain in phagosomes). Infecting C57BL/6 mice with an overexpressing strain leads to an attentuated infection in both spleen and lungs. The level of dnaA mRNA increases dramatically. Binds the promoter of dnaA, fbpD, ripA and itself, as well as oriC, which it may regulate. Upon co-overexpression of MrtA and MtrB growth in macrophages is partially restored, dnaA expression is not induced, although mouse infections are still attenuated, suggesting that bacterial growth in macrophages requires an optimal ratio of MtrB to MtrA.</text>
</comment>
<comment type="cofactor">
    <cofactor evidence="5 8 9">
        <name>Ca(2+)</name>
        <dbReference type="ChEBI" id="CHEBI:29108"/>
    </cofactor>
    <cofactor evidence="5 8 9">
        <name>Mg(2+)</name>
        <dbReference type="ChEBI" id="CHEBI:18420"/>
    </cofactor>
    <text evidence="5 8 9">Divalent cation. Ca(2+) and Mg(2+) have both been seen in crystal structures. Optimal DNA-binding requires Ca(2+).</text>
</comment>
<comment type="subunit">
    <text evidence="9 10 12">Probably a monomer when inactive, phosphorylation may permit it to oligomerize. It can oligomerize, and interacts with MrtB (PubMed:20702407, PubMed:21295603). Co-immunoprecipitates with DarG in the presence and absence of darT (PubMed:32634279).</text>
</comment>
<comment type="subcellular location">
    <subcellularLocation>
        <location evidence="15">Cytoplasm</location>
    </subcellularLocation>
</comment>
<comment type="induction">
    <text evidence="3 4 13">Expressed in culture (at protein level). Constitutively expressed in infected human blood-derived macrophages and mouse macrophage cell line J774A. Autoregulates its own expression.</text>
</comment>
<comment type="domain">
    <text>C-terminal domain binds DNA and interacts with MtrB.</text>
</comment>
<comment type="PTM">
    <text evidence="4 5 7 14">Phosphorylated by MtrB (Probable). Autophosphorylates very slowly. Phosphorylated protein binds DNA better than unphosphorylated.</text>
</comment>
<comment type="PTM">
    <text evidence="6">Pupylated at Lys-207 by the prokaryotic ubiquitin-like protein Pup, which leads to its degradation by the proteasome.</text>
</comment>
<comment type="disruption phenotype">
    <text evidence="3">Essential, it cannot be disrupted.</text>
</comment>
<comment type="miscellaneous">
    <text>Was identified as a natural substrate of the M.tuberculosis proteasome.</text>
</comment>
<comment type="sequence caution" evidence="14">
    <conflict type="erroneous initiation">
        <sequence resource="EMBL-CDS" id="AAB07804"/>
    </conflict>
    <text>Truncated N-terminus.</text>
</comment>
<organism>
    <name type="scientific">Mycobacterium tuberculosis (strain ATCC 25618 / H37Rv)</name>
    <dbReference type="NCBI Taxonomy" id="83332"/>
    <lineage>
        <taxon>Bacteria</taxon>
        <taxon>Bacillati</taxon>
        <taxon>Actinomycetota</taxon>
        <taxon>Actinomycetes</taxon>
        <taxon>Mycobacteriales</taxon>
        <taxon>Mycobacteriaceae</taxon>
        <taxon>Mycobacterium</taxon>
        <taxon>Mycobacterium tuberculosis complex</taxon>
    </lineage>
</organism>
<feature type="chain" id="PRO_0000081143" description="DNA-binding response regulator MtrA">
    <location>
        <begin position="1"/>
        <end position="228"/>
    </location>
</feature>
<feature type="domain" description="Response regulatory" evidence="1">
    <location>
        <begin position="7"/>
        <end position="120"/>
    </location>
</feature>
<feature type="DNA-binding region" description="OmpR/PhoB-type" evidence="2">
    <location>
        <begin position="128"/>
        <end position="227"/>
    </location>
</feature>
<feature type="binding site">
    <location>
        <position position="13"/>
    </location>
    <ligand>
        <name>a divalent metal cation</name>
        <dbReference type="ChEBI" id="CHEBI:60240"/>
    </ligand>
</feature>
<feature type="binding site">
    <location>
        <position position="56"/>
    </location>
    <ligand>
        <name>a divalent metal cation</name>
        <dbReference type="ChEBI" id="CHEBI:60240"/>
    </ligand>
</feature>
<feature type="binding site">
    <location>
        <position position="59"/>
    </location>
    <ligand>
        <name>a divalent metal cation</name>
        <dbReference type="ChEBI" id="CHEBI:60240"/>
    </ligand>
</feature>
<feature type="modified residue" description="4-aspartylphosphate" evidence="1 4 7">
    <location>
        <position position="56"/>
    </location>
</feature>
<feature type="cross-link" description="Isoglutamyl lysine isopeptide (Lys-Gln) (interchain with Q-Cter in protein Pup)" evidence="6">
    <location>
        <position position="207"/>
    </location>
</feature>
<feature type="mutagenesis site" description="No phosphorylation by EnvZ kinase in vitro. Binds fbpB and oriC DNA in the presence and absence of EnvZ and ATP. A merodiploid strain has late growth defects, fbpB is down-regulated. May be constitutively active." evidence="10">
    <original>D</original>
    <variation>A</variation>
    <location>
        <position position="13"/>
    </location>
</feature>
<feature type="mutagenesis site" description="No phosphorylation by EnvZ kinase in vitro. Binds DNA in the absence but not presence of EnvZ and ATP. A merodiploid strain has late growth defects. May mimic the phosphorylated state." evidence="4 7 10">
    <original>D</original>
    <variation>E</variation>
    <location>
        <position position="56"/>
    </location>
</feature>
<feature type="mutagenesis site" description="No phosphorylation by EnvZ kinase in vitro, does not bind DNA. Poor growth in infected macrophages and upon mouse infection. Fewer bacteria are mistargeted to lysosomes." evidence="4 7 10">
    <original>D</original>
    <variation>N</variation>
    <location>
        <position position="56"/>
    </location>
</feature>
<feature type="mutagenesis site" description="Phosphorylated by EnvZ kinase in vitro, reverses many phenotypes of mtrB knockout." evidence="11">
    <original>Y</original>
    <variation>C</variation>
    <location>
        <position position="102"/>
    </location>
</feature>
<feature type="strand" evidence="16">
    <location>
        <begin position="7"/>
        <end position="11"/>
    </location>
</feature>
<feature type="helix" evidence="16">
    <location>
        <begin position="15"/>
        <end position="27"/>
    </location>
</feature>
<feature type="strand" evidence="16">
    <location>
        <begin position="31"/>
        <end position="35"/>
    </location>
</feature>
<feature type="helix" evidence="16">
    <location>
        <begin position="38"/>
        <end position="40"/>
    </location>
</feature>
<feature type="helix" evidence="16">
    <location>
        <begin position="41"/>
        <end position="48"/>
    </location>
</feature>
<feature type="strand" evidence="16">
    <location>
        <begin position="51"/>
        <end position="58"/>
    </location>
</feature>
<feature type="strand" evidence="16">
    <location>
        <begin position="60"/>
        <end position="62"/>
    </location>
</feature>
<feature type="helix" evidence="16">
    <location>
        <begin position="64"/>
        <end position="72"/>
    </location>
</feature>
<feature type="strand" evidence="16">
    <location>
        <begin position="79"/>
        <end position="84"/>
    </location>
</feature>
<feature type="helix" evidence="16">
    <location>
        <begin position="91"/>
        <end position="96"/>
    </location>
</feature>
<feature type="strand" evidence="16">
    <location>
        <begin position="101"/>
        <end position="106"/>
    </location>
</feature>
<feature type="helix" evidence="16">
    <location>
        <begin position="109"/>
        <end position="119"/>
    </location>
</feature>
<feature type="strand" evidence="16">
    <location>
        <begin position="130"/>
        <end position="133"/>
    </location>
</feature>
<feature type="strand" evidence="16">
    <location>
        <begin position="136"/>
        <end position="139"/>
    </location>
</feature>
<feature type="turn" evidence="16">
    <location>
        <begin position="140"/>
        <end position="143"/>
    </location>
</feature>
<feature type="strand" evidence="16">
    <location>
        <begin position="144"/>
        <end position="147"/>
    </location>
</feature>
<feature type="strand" evidence="16">
    <location>
        <begin position="150"/>
        <end position="152"/>
    </location>
</feature>
<feature type="helix" evidence="16">
    <location>
        <begin position="156"/>
        <end position="167"/>
    </location>
</feature>
<feature type="helix" evidence="16">
    <location>
        <begin position="175"/>
        <end position="181"/>
    </location>
</feature>
<feature type="helix" evidence="16">
    <location>
        <begin position="192"/>
        <end position="205"/>
    </location>
</feature>
<feature type="strand" evidence="16">
    <location>
        <begin position="213"/>
        <end position="218"/>
    </location>
</feature>
<feature type="turn" evidence="16">
    <location>
        <begin position="219"/>
        <end position="221"/>
    </location>
</feature>
<feature type="strand" evidence="16">
    <location>
        <begin position="222"/>
        <end position="225"/>
    </location>
</feature>
<accession>P9WGM7</accession>
<accession>L0TES0</accession>
<accession>P0A5Z4</accession>
<accession>Q50447</accession>
<proteinExistence type="evidence at protein level"/>
<reference key="1">
    <citation type="journal article" date="1996" name="J. Bacteriol.">
        <title>Elements of signal transduction in Mycobacterium tuberculosis: in vitro phosphorylation and in vivo expression of the response regulator MtrA.</title>
        <authorList>
            <person name="Via L.E."/>
            <person name="Curcic R."/>
            <person name="Mudd M.H."/>
            <person name="Dhandayuthapani S."/>
            <person name="Ulmer R.J."/>
            <person name="Deretic V."/>
        </authorList>
    </citation>
    <scope>NUCLEOTIDE SEQUENCE [GENOMIC DNA]</scope>
    <scope>CHARACTERIZATION</scope>
    <scope>INDUCTION</scope>
    <source>
        <strain>ATCC 25618 / H37Rv</strain>
    </source>
</reference>
<reference key="2">
    <citation type="journal article" date="1998" name="Nature">
        <title>Deciphering the biology of Mycobacterium tuberculosis from the complete genome sequence.</title>
        <authorList>
            <person name="Cole S.T."/>
            <person name="Brosch R."/>
            <person name="Parkhill J."/>
            <person name="Garnier T."/>
            <person name="Churcher C.M."/>
            <person name="Harris D.E."/>
            <person name="Gordon S.V."/>
            <person name="Eiglmeier K."/>
            <person name="Gas S."/>
            <person name="Barry C.E. III"/>
            <person name="Tekaia F."/>
            <person name="Badcock K."/>
            <person name="Basham D."/>
            <person name="Brown D."/>
            <person name="Chillingworth T."/>
            <person name="Connor R."/>
            <person name="Davies R.M."/>
            <person name="Devlin K."/>
            <person name="Feltwell T."/>
            <person name="Gentles S."/>
            <person name="Hamlin N."/>
            <person name="Holroyd S."/>
            <person name="Hornsby T."/>
            <person name="Jagels K."/>
            <person name="Krogh A."/>
            <person name="McLean J."/>
            <person name="Moule S."/>
            <person name="Murphy L.D."/>
            <person name="Oliver S."/>
            <person name="Osborne J."/>
            <person name="Quail M.A."/>
            <person name="Rajandream M.A."/>
            <person name="Rogers J."/>
            <person name="Rutter S."/>
            <person name="Seeger K."/>
            <person name="Skelton S."/>
            <person name="Squares S."/>
            <person name="Squares R."/>
            <person name="Sulston J.E."/>
            <person name="Taylor K."/>
            <person name="Whitehead S."/>
            <person name="Barrell B.G."/>
        </authorList>
    </citation>
    <scope>NUCLEOTIDE SEQUENCE [LARGE SCALE GENOMIC DNA]</scope>
    <source>
        <strain>ATCC 25618 / H37Rv</strain>
    </source>
</reference>
<reference key="3">
    <citation type="journal article" date="2000" name="J. Bacteriol.">
        <title>An essential two-component signal transduction system in Mycobacterium tuberculosis.</title>
        <authorList>
            <person name="Zahrt T.C."/>
            <person name="Deretic V."/>
        </authorList>
    </citation>
    <scope>INDUCTION</scope>
    <scope>DISRUPTION PHENOTYPE</scope>
    <source>
        <strain>ATCC 25618 / H37Rv</strain>
    </source>
</reference>
<reference key="4">
    <citation type="journal article" date="2006" name="Mol. Microbiol.">
        <title>Modulation of Mycobacterium tuberculosis proliferation by MtrA, an essential two-component response regulator.</title>
        <authorList>
            <person name="Fol M."/>
            <person name="Chauhan A."/>
            <person name="Nair N.K."/>
            <person name="Maloney E."/>
            <person name="Moomey M."/>
            <person name="Jagannath C."/>
            <person name="Madiraju M.V."/>
            <person name="Rajagopalan M."/>
        </authorList>
    </citation>
    <scope>SUBCELLULAR LOCATION</scope>
    <scope>INDUCTION</scope>
    <scope>DNA-BINDING</scope>
    <scope>PHOSPHORYLATION AT ASP-56</scope>
    <scope>MUTAGENESIS OF ASP-56</scope>
    <source>
        <strain>ATCC 25618 / H37Rv</strain>
    </source>
</reference>
<reference key="5">
    <citation type="journal article" date="2010" name="J. Biochem.">
        <title>Characterization of a functional C-terminus of the Mycobacterium tuberculosis MtrA responsible for both DNA binding and interaction with its two-component partner protein, MtrB.</title>
        <authorList>
            <person name="Li Y."/>
            <person name="Zeng J."/>
            <person name="He Z.G."/>
        </authorList>
    </citation>
    <scope>DNA-BINDING</scope>
    <scope>COFACTOR</scope>
</reference>
<reference key="6">
    <citation type="journal article" date="2010" name="J. Biol. Chem.">
        <title>Mycobacterium tuberculosis origin of replication and the promoter for immunodominant secreted antigen 85B are the targets of MtrA, the essential response regulator.</title>
        <authorList>
            <person name="Rajagopalan M."/>
            <person name="Dziedzic R."/>
            <person name="Al Zayer M."/>
            <person name="Stankowska D."/>
            <person name="Ouimet M.C."/>
            <person name="Bastedo D.P."/>
            <person name="Marczynski G.T."/>
            <person name="Madiraju M.V."/>
        </authorList>
    </citation>
    <scope>FUNCTION</scope>
    <scope>DNA-BINDING</scope>
    <scope>PHOSPHORYLATION AT ASP-56</scope>
    <scope>MUTAGENESIS OF ASP-56</scope>
    <source>
        <strain>ATCC 25618 / H37Rv</strain>
    </source>
</reference>
<reference key="7">
    <citation type="journal article" date="2010" name="PLoS ONE">
        <title>Prokaryotic ubiquitin-like protein (Pup) proteome of Mycobacterium tuberculosis.</title>
        <authorList>
            <person name="Festa R.A."/>
            <person name="McAllister F."/>
            <person name="Pearce M.J."/>
            <person name="Mintseris J."/>
            <person name="Burns K.E."/>
            <person name="Gygi S.P."/>
            <person name="Darwin K.H."/>
        </authorList>
    </citation>
    <scope>PROTEASOME SUBSTRATE</scope>
    <scope>PUPYLATION AT LYS-207</scope>
    <scope>IDENTIFICATION BY MASS SPECTROMETRY</scope>
    <source>
        <strain>ATCC 25618 / H37Rv</strain>
    </source>
</reference>
<reference key="8">
    <citation type="journal article" date="2011" name="Mol. Cell. Proteomics">
        <title>Proteogenomic analysis of Mycobacterium tuberculosis by high resolution mass spectrometry.</title>
        <authorList>
            <person name="Kelkar D.S."/>
            <person name="Kumar D."/>
            <person name="Kumar P."/>
            <person name="Balakrishnan L."/>
            <person name="Muthusamy B."/>
            <person name="Yadav A.K."/>
            <person name="Shrivastava P."/>
            <person name="Marimuthu A."/>
            <person name="Anand S."/>
            <person name="Sundaram H."/>
            <person name="Kingsbury R."/>
            <person name="Harsha H.C."/>
            <person name="Nair B."/>
            <person name="Prasad T.S."/>
            <person name="Chauhan D.S."/>
            <person name="Katoch K."/>
            <person name="Katoch V.M."/>
            <person name="Kumar P."/>
            <person name="Chaerkady R."/>
            <person name="Ramachandran S."/>
            <person name="Dash D."/>
            <person name="Pandey A."/>
        </authorList>
    </citation>
    <scope>IDENTIFICATION BY MASS SPECTROMETRY [LARGE SCALE ANALYSIS]</scope>
    <source>
        <strain>ATCC 25618 / H37Rv</strain>
    </source>
</reference>
<reference key="9">
    <citation type="journal article" date="2011" name="Plasmid">
        <title>Mycobacterium tuberculosis mtrA merodiploid strains with point mutations in the signal-receiving domain of MtrA exhibit growth defects in nutrient broth.</title>
        <authorList>
            <person name="Al Zayer M."/>
            <person name="Stankowska D."/>
            <person name="Dziedzic R."/>
            <person name="Sarva K."/>
            <person name="Madiraju M.V."/>
            <person name="Rajagopalan M."/>
        </authorList>
    </citation>
    <scope>FUNCTION</scope>
    <scope>SUBUNIT</scope>
    <scope>INTERACTION WITH MTRB</scope>
    <scope>DNA-BINDING</scope>
    <scope>MUTAGENESIS OF ASP-13 AND ASP-56</scope>
    <source>
        <strain>ATCC 25618 / H37Rv</strain>
    </source>
</reference>
<reference key="10">
    <citation type="journal article" date="2012" name="J. Biol. Chem.">
        <title>Septal localization of the Mycobacterium tuberculosis MtrB sensor kinase promotes MtrA regulon expression.</title>
        <authorList>
            <person name="Plocinska R."/>
            <person name="Purushotham G."/>
            <person name="Sarva K."/>
            <person name="Vadrevu I.S."/>
            <person name="Pandeeti E.V."/>
            <person name="Arora N."/>
            <person name="Plocinski P."/>
            <person name="Madiraju M.V."/>
            <person name="Rajagopalan M."/>
        </authorList>
    </citation>
    <scope>FUNCTION</scope>
    <scope>DNA-BINDING</scope>
    <scope>MUTAGENESIS OF TYR-102</scope>
    <source>
        <strain>ATCC 25618 / H37Rv</strain>
    </source>
</reference>
<reference key="11">
    <citation type="journal article" date="2020" name="Mol. Microbiol.">
        <title>Depletion of the DarG antitoxin in Mycobacterium tuberculosis triggers the DNA-damage response and leads to cell death.</title>
        <authorList>
            <person name="Zaveri A."/>
            <person name="Wang R."/>
            <person name="Botella L."/>
            <person name="Sharma R."/>
            <person name="Zhu L."/>
            <person name="Wallach J.B."/>
            <person name="Song N."/>
            <person name="Jansen R.S."/>
            <person name="Rhee K.Y."/>
            <person name="Ehrt S."/>
            <person name="Schnappinger D."/>
        </authorList>
    </citation>
    <scope>SUBUNIT</scope>
    <source>
        <strain>H37Rv</strain>
    </source>
</reference>
<reference key="12">
    <citation type="journal article" date="2007" name="Biochemistry">
        <title>Domain orientation in the inactive response regulator Mycobacterium tuberculosis MtrA provides a barrier to activation.</title>
        <authorList>
            <person name="Friedland N."/>
            <person name="Mack T.R."/>
            <person name="Yu M."/>
            <person name="Hung L.W."/>
            <person name="Terwilliger T.C."/>
            <person name="Waldo G.S."/>
            <person name="Stock A.M."/>
        </authorList>
    </citation>
    <scope>X-RAY CRYSTALLOGRAPHY (2.1 ANGSTROMS) IN THE INACTIVE STATE</scope>
    <scope>COFACTOR</scope>
    <scope>PHOSPHORYLATION</scope>
    <source>
        <strain>ATCC 25618 / H37Rv</strain>
    </source>
</reference>
<reference key="13">
    <citation type="journal article" date="2010" name="J. Biol. Chem.">
        <title>Regulation of response regulator autophosphorylation through interdomain contacts.</title>
        <authorList>
            <person name="Barbieri C.M."/>
            <person name="Mack T.R."/>
            <person name="Robinson V.L."/>
            <person name="Miller M.T."/>
            <person name="Stock A.M."/>
        </authorList>
    </citation>
    <scope>X-RAY CRYSTALLOGRAPHY (2.5 ANGSTROMS) OF 1-125</scope>
    <scope>COFACTOR</scope>
    <scope>SUBUNIT</scope>
    <source>
        <strain>ATCC 25618 / H37Rv</strain>
    </source>
</reference>
<name>MTRA_MYCTU</name>
<evidence type="ECO:0000255" key="1">
    <source>
        <dbReference type="PROSITE-ProRule" id="PRU00169"/>
    </source>
</evidence>
<evidence type="ECO:0000255" key="2">
    <source>
        <dbReference type="PROSITE-ProRule" id="PRU01091"/>
    </source>
</evidence>
<evidence type="ECO:0000269" key="3">
    <source>
    </source>
</evidence>
<evidence type="ECO:0000269" key="4">
    <source>
    </source>
</evidence>
<evidence type="ECO:0000269" key="5">
    <source>
    </source>
</evidence>
<evidence type="ECO:0000269" key="6">
    <source>
    </source>
</evidence>
<evidence type="ECO:0000269" key="7">
    <source>
    </source>
</evidence>
<evidence type="ECO:0000269" key="8">
    <source>
    </source>
</evidence>
<evidence type="ECO:0000269" key="9">
    <source>
    </source>
</evidence>
<evidence type="ECO:0000269" key="10">
    <source>
    </source>
</evidence>
<evidence type="ECO:0000269" key="11">
    <source>
    </source>
</evidence>
<evidence type="ECO:0000269" key="12">
    <source>
    </source>
</evidence>
<evidence type="ECO:0000269" key="13">
    <source>
    </source>
</evidence>
<evidence type="ECO:0000305" key="14"/>
<evidence type="ECO:0000305" key="15">
    <source>
    </source>
</evidence>
<evidence type="ECO:0007829" key="16">
    <source>
        <dbReference type="PDB" id="2GWR"/>
    </source>
</evidence>
<protein>
    <recommendedName>
        <fullName>DNA-binding response regulator MtrA</fullName>
    </recommendedName>
</protein>
<keyword id="KW-0002">3D-structure</keyword>
<keyword id="KW-0963">Cytoplasm</keyword>
<keyword id="KW-0238">DNA-binding</keyword>
<keyword id="KW-1017">Isopeptide bond</keyword>
<keyword id="KW-0479">Metal-binding</keyword>
<keyword id="KW-0597">Phosphoprotein</keyword>
<keyword id="KW-1185">Reference proteome</keyword>
<keyword id="KW-0804">Transcription</keyword>
<keyword id="KW-0805">Transcription regulation</keyword>
<keyword id="KW-0902">Two-component regulatory system</keyword>
<keyword id="KW-0832">Ubl conjugation</keyword>